<comment type="function">
    <text evidence="1">Catalyzes the methylthiolation of an aspartic acid residue of ribosomal protein uS12.</text>
</comment>
<comment type="catalytic activity">
    <reaction evidence="1">
        <text>L-aspartate(89)-[ribosomal protein uS12]-hydrogen + (sulfur carrier)-SH + AH2 + 2 S-adenosyl-L-methionine = 3-methylsulfanyl-L-aspartate(89)-[ribosomal protein uS12]-hydrogen + (sulfur carrier)-H + 5'-deoxyadenosine + L-methionine + A + S-adenosyl-L-homocysteine + 2 H(+)</text>
        <dbReference type="Rhea" id="RHEA:37087"/>
        <dbReference type="Rhea" id="RHEA-COMP:10460"/>
        <dbReference type="Rhea" id="RHEA-COMP:10461"/>
        <dbReference type="Rhea" id="RHEA-COMP:14737"/>
        <dbReference type="Rhea" id="RHEA-COMP:14739"/>
        <dbReference type="ChEBI" id="CHEBI:13193"/>
        <dbReference type="ChEBI" id="CHEBI:15378"/>
        <dbReference type="ChEBI" id="CHEBI:17319"/>
        <dbReference type="ChEBI" id="CHEBI:17499"/>
        <dbReference type="ChEBI" id="CHEBI:29917"/>
        <dbReference type="ChEBI" id="CHEBI:29961"/>
        <dbReference type="ChEBI" id="CHEBI:57844"/>
        <dbReference type="ChEBI" id="CHEBI:57856"/>
        <dbReference type="ChEBI" id="CHEBI:59789"/>
        <dbReference type="ChEBI" id="CHEBI:64428"/>
        <dbReference type="ChEBI" id="CHEBI:73599"/>
        <dbReference type="EC" id="2.8.4.4"/>
    </reaction>
</comment>
<comment type="cofactor">
    <cofactor evidence="1">
        <name>[4Fe-4S] cluster</name>
        <dbReference type="ChEBI" id="CHEBI:49883"/>
    </cofactor>
    <text evidence="1">Binds 2 [4Fe-4S] clusters. One cluster is coordinated with 3 cysteines and an exchangeable S-adenosyl-L-methionine.</text>
</comment>
<comment type="subcellular location">
    <subcellularLocation>
        <location evidence="1">Cytoplasm</location>
    </subcellularLocation>
</comment>
<comment type="similarity">
    <text evidence="1">Belongs to the methylthiotransferase family. RimO subfamily.</text>
</comment>
<organism>
    <name type="scientific">Shewanella sp. (strain MR-4)</name>
    <dbReference type="NCBI Taxonomy" id="60480"/>
    <lineage>
        <taxon>Bacteria</taxon>
        <taxon>Pseudomonadati</taxon>
        <taxon>Pseudomonadota</taxon>
        <taxon>Gammaproteobacteria</taxon>
        <taxon>Alteromonadales</taxon>
        <taxon>Shewanellaceae</taxon>
        <taxon>Shewanella</taxon>
    </lineage>
</organism>
<evidence type="ECO:0000255" key="1">
    <source>
        <dbReference type="HAMAP-Rule" id="MF_01865"/>
    </source>
</evidence>
<evidence type="ECO:0000255" key="2">
    <source>
        <dbReference type="PROSITE-ProRule" id="PRU01266"/>
    </source>
</evidence>
<sequence length="476" mass="53169">MTVETFNPKQTTTLETPAKTLEAASADSTATGNRIGFVSLGCPKNLVDSERILTQLRIDGYEVTNSYDNADLVIVNTCGFIDAAVEESLDAVREALEENGKVIVTGCLGAKENQIREVHPDVLEITGPHSYEAVLKHVHKYVPKPEHNPFTSLIPQTGVKLTPKHYAYLKISEGCDNRCTFCIIPALRGDLDSRPAGSVLDEAKRLVESGVQEILVVSQDTSAYGKDKGGRTDFWNGMPVKQDITSLARQLGKMGAWVRLHYIYPYPWVDDLIPLMAEGLILPYLDIPMQHASPRILKMMKRPGRVDRQLEAIQRWREICPDLVIRSTFIVGFPGETEEDFEMLLDFLREARLDRVGCFKYSEVEGAVANTIAELISEDVKEDRYHRFMEVQAEISAERLARFVGRTMDILIDDVDEEGAIGRSFADAPEIDGMVFINGETELEPGMLVRAVITHSDEHDLWAELVDADAEDDIEA</sequence>
<name>RIMO_SHESM</name>
<feature type="chain" id="PRO_0000375006" description="Ribosomal protein uS12 methylthiotransferase RimO">
    <location>
        <begin position="1"/>
        <end position="476"/>
    </location>
</feature>
<feature type="domain" description="MTTase N-terminal" evidence="1">
    <location>
        <begin position="33"/>
        <end position="143"/>
    </location>
</feature>
<feature type="domain" description="Radical SAM core" evidence="2">
    <location>
        <begin position="161"/>
        <end position="398"/>
    </location>
</feature>
<feature type="domain" description="TRAM" evidence="1">
    <location>
        <begin position="401"/>
        <end position="467"/>
    </location>
</feature>
<feature type="binding site" evidence="1">
    <location>
        <position position="42"/>
    </location>
    <ligand>
        <name>[4Fe-4S] cluster</name>
        <dbReference type="ChEBI" id="CHEBI:49883"/>
        <label>1</label>
    </ligand>
</feature>
<feature type="binding site" evidence="1">
    <location>
        <position position="78"/>
    </location>
    <ligand>
        <name>[4Fe-4S] cluster</name>
        <dbReference type="ChEBI" id="CHEBI:49883"/>
        <label>1</label>
    </ligand>
</feature>
<feature type="binding site" evidence="1">
    <location>
        <position position="107"/>
    </location>
    <ligand>
        <name>[4Fe-4S] cluster</name>
        <dbReference type="ChEBI" id="CHEBI:49883"/>
        <label>1</label>
    </ligand>
</feature>
<feature type="binding site" evidence="1">
    <location>
        <position position="175"/>
    </location>
    <ligand>
        <name>[4Fe-4S] cluster</name>
        <dbReference type="ChEBI" id="CHEBI:49883"/>
        <label>2</label>
        <note>4Fe-4S-S-AdoMet</note>
    </ligand>
</feature>
<feature type="binding site" evidence="1">
    <location>
        <position position="179"/>
    </location>
    <ligand>
        <name>[4Fe-4S] cluster</name>
        <dbReference type="ChEBI" id="CHEBI:49883"/>
        <label>2</label>
        <note>4Fe-4S-S-AdoMet</note>
    </ligand>
</feature>
<feature type="binding site" evidence="1">
    <location>
        <position position="182"/>
    </location>
    <ligand>
        <name>[4Fe-4S] cluster</name>
        <dbReference type="ChEBI" id="CHEBI:49883"/>
        <label>2</label>
        <note>4Fe-4S-S-AdoMet</note>
    </ligand>
</feature>
<dbReference type="EC" id="2.8.4.4" evidence="1"/>
<dbReference type="EMBL" id="CP000446">
    <property type="protein sequence ID" value="ABI40517.1"/>
    <property type="molecule type" value="Genomic_DNA"/>
</dbReference>
<dbReference type="RefSeq" id="WP_011624182.1">
    <property type="nucleotide sequence ID" value="NC_008321.1"/>
</dbReference>
<dbReference type="SMR" id="Q0HEK0"/>
<dbReference type="KEGG" id="she:Shewmr4_3451"/>
<dbReference type="HOGENOM" id="CLU_018697_0_0_6"/>
<dbReference type="GO" id="GO:0005829">
    <property type="term" value="C:cytosol"/>
    <property type="evidence" value="ECO:0007669"/>
    <property type="project" value="TreeGrafter"/>
</dbReference>
<dbReference type="GO" id="GO:0051539">
    <property type="term" value="F:4 iron, 4 sulfur cluster binding"/>
    <property type="evidence" value="ECO:0007669"/>
    <property type="project" value="UniProtKB-UniRule"/>
</dbReference>
<dbReference type="GO" id="GO:0035599">
    <property type="term" value="F:aspartic acid methylthiotransferase activity"/>
    <property type="evidence" value="ECO:0007669"/>
    <property type="project" value="TreeGrafter"/>
</dbReference>
<dbReference type="GO" id="GO:0046872">
    <property type="term" value="F:metal ion binding"/>
    <property type="evidence" value="ECO:0007669"/>
    <property type="project" value="UniProtKB-KW"/>
</dbReference>
<dbReference type="GO" id="GO:0103039">
    <property type="term" value="F:protein methylthiotransferase activity"/>
    <property type="evidence" value="ECO:0007669"/>
    <property type="project" value="UniProtKB-EC"/>
</dbReference>
<dbReference type="GO" id="GO:0006400">
    <property type="term" value="P:tRNA modification"/>
    <property type="evidence" value="ECO:0007669"/>
    <property type="project" value="InterPro"/>
</dbReference>
<dbReference type="CDD" id="cd01335">
    <property type="entry name" value="Radical_SAM"/>
    <property type="match status" value="1"/>
</dbReference>
<dbReference type="FunFam" id="2.40.50.140:FF:000060">
    <property type="entry name" value="Ribosomal protein S12 methylthiotransferase RimO"/>
    <property type="match status" value="1"/>
</dbReference>
<dbReference type="FunFam" id="3.40.50.12160:FF:000002">
    <property type="entry name" value="Ribosomal protein S12 methylthiotransferase RimO"/>
    <property type="match status" value="1"/>
</dbReference>
<dbReference type="FunFam" id="3.80.30.20:FF:000001">
    <property type="entry name" value="tRNA-2-methylthio-N(6)-dimethylallyladenosine synthase 2"/>
    <property type="match status" value="1"/>
</dbReference>
<dbReference type="Gene3D" id="3.40.50.12160">
    <property type="entry name" value="Methylthiotransferase, N-terminal domain"/>
    <property type="match status" value="1"/>
</dbReference>
<dbReference type="Gene3D" id="2.40.50.140">
    <property type="entry name" value="Nucleic acid-binding proteins"/>
    <property type="match status" value="1"/>
</dbReference>
<dbReference type="Gene3D" id="3.80.30.20">
    <property type="entry name" value="tm_1862 like domain"/>
    <property type="match status" value="1"/>
</dbReference>
<dbReference type="HAMAP" id="MF_01865">
    <property type="entry name" value="MTTase_RimO"/>
    <property type="match status" value="1"/>
</dbReference>
<dbReference type="InterPro" id="IPR006638">
    <property type="entry name" value="Elp3/MiaA/NifB-like_rSAM"/>
</dbReference>
<dbReference type="InterPro" id="IPR005839">
    <property type="entry name" value="Methylthiotransferase"/>
</dbReference>
<dbReference type="InterPro" id="IPR020612">
    <property type="entry name" value="Methylthiotransferase_CS"/>
</dbReference>
<dbReference type="InterPro" id="IPR013848">
    <property type="entry name" value="Methylthiotransferase_N"/>
</dbReference>
<dbReference type="InterPro" id="IPR038135">
    <property type="entry name" value="Methylthiotransferase_N_sf"/>
</dbReference>
<dbReference type="InterPro" id="IPR012340">
    <property type="entry name" value="NA-bd_OB-fold"/>
</dbReference>
<dbReference type="InterPro" id="IPR005840">
    <property type="entry name" value="Ribosomal_uS12_MeSTrfase_RimO"/>
</dbReference>
<dbReference type="InterPro" id="IPR007197">
    <property type="entry name" value="rSAM"/>
</dbReference>
<dbReference type="InterPro" id="IPR023404">
    <property type="entry name" value="rSAM_horseshoe"/>
</dbReference>
<dbReference type="InterPro" id="IPR002792">
    <property type="entry name" value="TRAM_dom"/>
</dbReference>
<dbReference type="NCBIfam" id="TIGR01125">
    <property type="entry name" value="30S ribosomal protein S12 methylthiotransferase RimO"/>
    <property type="match status" value="1"/>
</dbReference>
<dbReference type="NCBIfam" id="TIGR00089">
    <property type="entry name" value="MiaB/RimO family radical SAM methylthiotransferase"/>
    <property type="match status" value="1"/>
</dbReference>
<dbReference type="PANTHER" id="PTHR43837">
    <property type="entry name" value="RIBOSOMAL PROTEIN S12 METHYLTHIOTRANSFERASE RIMO"/>
    <property type="match status" value="1"/>
</dbReference>
<dbReference type="PANTHER" id="PTHR43837:SF1">
    <property type="entry name" value="RIBOSOMAL PROTEIN US12 METHYLTHIOTRANSFERASE RIMO"/>
    <property type="match status" value="1"/>
</dbReference>
<dbReference type="Pfam" id="PF04055">
    <property type="entry name" value="Radical_SAM"/>
    <property type="match status" value="1"/>
</dbReference>
<dbReference type="Pfam" id="PF18693">
    <property type="entry name" value="TRAM_2"/>
    <property type="match status" value="1"/>
</dbReference>
<dbReference type="Pfam" id="PF00919">
    <property type="entry name" value="UPF0004"/>
    <property type="match status" value="1"/>
</dbReference>
<dbReference type="SFLD" id="SFLDG01082">
    <property type="entry name" value="B12-binding_domain_containing"/>
    <property type="match status" value="1"/>
</dbReference>
<dbReference type="SFLD" id="SFLDG01061">
    <property type="entry name" value="methylthiotransferase"/>
    <property type="match status" value="1"/>
</dbReference>
<dbReference type="SFLD" id="SFLDF00274">
    <property type="entry name" value="ribosomal_protein_S12_methylth"/>
    <property type="match status" value="1"/>
</dbReference>
<dbReference type="SMART" id="SM00729">
    <property type="entry name" value="Elp3"/>
    <property type="match status" value="1"/>
</dbReference>
<dbReference type="SUPFAM" id="SSF102114">
    <property type="entry name" value="Radical SAM enzymes"/>
    <property type="match status" value="1"/>
</dbReference>
<dbReference type="PROSITE" id="PS51449">
    <property type="entry name" value="MTTASE_N"/>
    <property type="match status" value="1"/>
</dbReference>
<dbReference type="PROSITE" id="PS01278">
    <property type="entry name" value="MTTASE_RADICAL"/>
    <property type="match status" value="1"/>
</dbReference>
<dbReference type="PROSITE" id="PS51918">
    <property type="entry name" value="RADICAL_SAM"/>
    <property type="match status" value="1"/>
</dbReference>
<dbReference type="PROSITE" id="PS50926">
    <property type="entry name" value="TRAM"/>
    <property type="match status" value="1"/>
</dbReference>
<protein>
    <recommendedName>
        <fullName evidence="1">Ribosomal protein uS12 methylthiotransferase RimO</fullName>
        <shortName evidence="1">uS12 MTTase</shortName>
        <shortName evidence="1">uS12 methylthiotransferase</shortName>
        <ecNumber evidence="1">2.8.4.4</ecNumber>
    </recommendedName>
    <alternativeName>
        <fullName evidence="1">Ribosomal protein uS12 (aspartate-C(3))-methylthiotransferase</fullName>
    </alternativeName>
    <alternativeName>
        <fullName evidence="1">Ribosome maturation factor RimO</fullName>
    </alternativeName>
</protein>
<reference key="1">
    <citation type="submission" date="2006-08" db="EMBL/GenBank/DDBJ databases">
        <title>Complete sequence of Shewanella sp. MR-4.</title>
        <authorList>
            <consortium name="US DOE Joint Genome Institute"/>
            <person name="Copeland A."/>
            <person name="Lucas S."/>
            <person name="Lapidus A."/>
            <person name="Barry K."/>
            <person name="Detter J.C."/>
            <person name="Glavina del Rio T."/>
            <person name="Hammon N."/>
            <person name="Israni S."/>
            <person name="Dalin E."/>
            <person name="Tice H."/>
            <person name="Pitluck S."/>
            <person name="Kiss H."/>
            <person name="Brettin T."/>
            <person name="Bruce D."/>
            <person name="Han C."/>
            <person name="Tapia R."/>
            <person name="Gilna P."/>
            <person name="Schmutz J."/>
            <person name="Larimer F."/>
            <person name="Land M."/>
            <person name="Hauser L."/>
            <person name="Kyrpides N."/>
            <person name="Mikhailova N."/>
            <person name="Nealson K."/>
            <person name="Konstantinidis K."/>
            <person name="Klappenbach J."/>
            <person name="Tiedje J."/>
            <person name="Richardson P."/>
        </authorList>
    </citation>
    <scope>NUCLEOTIDE SEQUENCE [LARGE SCALE GENOMIC DNA]</scope>
    <source>
        <strain>MR-4</strain>
    </source>
</reference>
<gene>
    <name evidence="1" type="primary">rimO</name>
    <name type="ordered locus">Shewmr4_3451</name>
</gene>
<proteinExistence type="inferred from homology"/>
<accession>Q0HEK0</accession>
<keyword id="KW-0004">4Fe-4S</keyword>
<keyword id="KW-0963">Cytoplasm</keyword>
<keyword id="KW-0408">Iron</keyword>
<keyword id="KW-0411">Iron-sulfur</keyword>
<keyword id="KW-0479">Metal-binding</keyword>
<keyword id="KW-0949">S-adenosyl-L-methionine</keyword>
<keyword id="KW-0808">Transferase</keyword>